<reference key="1">
    <citation type="submission" date="2004-06" db="EMBL/GenBank/DDBJ databases">
        <authorList>
            <consortium name="NIH - Xenopus Gene Collection (XGC) project"/>
        </authorList>
    </citation>
    <scope>NUCLEOTIDE SEQUENCE [LARGE SCALE MRNA]</scope>
    <source>
        <tissue>Kidney</tissue>
    </source>
</reference>
<dbReference type="EMBL" id="BC074159">
    <property type="protein sequence ID" value="AAH74159.1"/>
    <property type="molecule type" value="mRNA"/>
</dbReference>
<dbReference type="RefSeq" id="NP_001086075.1">
    <property type="nucleotide sequence ID" value="NM_001092606.1"/>
</dbReference>
<dbReference type="GlyCosmos" id="Q6GMB1">
    <property type="glycosylation" value="1 site, No reported glycans"/>
</dbReference>
<dbReference type="DNASU" id="444504"/>
<dbReference type="GeneID" id="444504"/>
<dbReference type="KEGG" id="xla:444504"/>
<dbReference type="AGR" id="Xenbase:XB-GENE-6254899"/>
<dbReference type="CTD" id="444504"/>
<dbReference type="Xenbase" id="XB-GENE-6254899">
    <property type="gene designation" value="tmem161a.L"/>
</dbReference>
<dbReference type="OrthoDB" id="784140at2759"/>
<dbReference type="Proteomes" id="UP000186698">
    <property type="component" value="Chromosome 1L"/>
</dbReference>
<dbReference type="Bgee" id="444504">
    <property type="expression patterns" value="Expressed in neurula embryo and 19 other cell types or tissues"/>
</dbReference>
<dbReference type="GO" id="GO:0016020">
    <property type="term" value="C:membrane"/>
    <property type="evidence" value="ECO:0007669"/>
    <property type="project" value="UniProtKB-SubCell"/>
</dbReference>
<dbReference type="InterPro" id="IPR019395">
    <property type="entry name" value="Transmembrane_161A/B"/>
</dbReference>
<dbReference type="PANTHER" id="PTHR13624">
    <property type="entry name" value="RE42071P"/>
    <property type="match status" value="1"/>
</dbReference>
<dbReference type="PANTHER" id="PTHR13624:SF4">
    <property type="entry name" value="TRANSMEMBRANE PROTEIN 161A"/>
    <property type="match status" value="1"/>
</dbReference>
<dbReference type="Pfam" id="PF10268">
    <property type="entry name" value="Tmemb_161AB"/>
    <property type="match status" value="1"/>
</dbReference>
<sequence>MAVMGIQMVVTLLVASLMQRVSPHYSFGRWLLCNGSLFRYKHPTEEELRTLAGKQKPKAKKERRTNGVAEEKPLTVPKDIDLRLDTQPINTMDALVLRYFLEYQWFIDFALYSTIIYLFTEAYYCVVDAQNEINIGVLWCLMSIIFSIKVLFTVMKHYFRSEEGGERSVCMTFAFFFLLIAMIVTIVRDEYLEFGLEPGLASVCHNLENFLAQQGWQWSMPFVKLAFKIALVALCAFLGGCLTFPGLRLAQTHLDALKMAADRPMLQLLLHMSFLPPVIVVVLWIRPITRDFLLNAPMGKESVELMSNSAYNTFRLWIIVLLCLLRFCLTRFHLQAYLCLADRWVEQMKREAGRISMLEIQRKISRIFCYLTVVALQYLAPVILTFHCVFMLKSLGDYSWGLYPEPPGFSPVVDSSPVQSHSPTSEEEEDTEDVQAAVEQIMGVLTSLRGLFTPLFFRGIFSFLTWWVSVCQIITSLFGLYFHQYLGAS</sequence>
<proteinExistence type="evidence at transcript level"/>
<accession>Q6GMB1</accession>
<feature type="signal peptide" evidence="2">
    <location>
        <begin position="1"/>
        <end position="23"/>
    </location>
</feature>
<feature type="chain" id="PRO_0000288087" description="Transmembrane protein 161A">
    <location>
        <begin position="24"/>
        <end position="489"/>
    </location>
</feature>
<feature type="topological domain" description="Extracellular" evidence="2">
    <location>
        <begin position="24"/>
        <end position="98"/>
    </location>
</feature>
<feature type="transmembrane region" description="Helical" evidence="2">
    <location>
        <begin position="99"/>
        <end position="119"/>
    </location>
</feature>
<feature type="topological domain" description="Cytoplasmic" evidence="2">
    <location>
        <begin position="120"/>
        <end position="134"/>
    </location>
</feature>
<feature type="transmembrane region" description="Helical" evidence="2">
    <location>
        <begin position="135"/>
        <end position="155"/>
    </location>
</feature>
<feature type="topological domain" description="Extracellular" evidence="2">
    <location>
        <begin position="156"/>
        <end position="166"/>
    </location>
</feature>
<feature type="transmembrane region" description="Helical" evidence="2">
    <location>
        <begin position="167"/>
        <end position="187"/>
    </location>
</feature>
<feature type="topological domain" description="Cytoplasmic" evidence="2">
    <location>
        <begin position="188"/>
        <end position="224"/>
    </location>
</feature>
<feature type="transmembrane region" description="Helical" evidence="2">
    <location>
        <begin position="225"/>
        <end position="245"/>
    </location>
</feature>
<feature type="topological domain" description="Extracellular" evidence="2">
    <location>
        <begin position="246"/>
        <end position="264"/>
    </location>
</feature>
<feature type="transmembrane region" description="Helical" evidence="2">
    <location>
        <begin position="265"/>
        <end position="285"/>
    </location>
</feature>
<feature type="topological domain" description="Cytoplasmic" evidence="2">
    <location>
        <begin position="286"/>
        <end position="304"/>
    </location>
</feature>
<feature type="transmembrane region" description="Helical" evidence="2">
    <location>
        <begin position="305"/>
        <end position="325"/>
    </location>
</feature>
<feature type="topological domain" description="Extracellular" evidence="2">
    <location>
        <begin position="326"/>
        <end position="370"/>
    </location>
</feature>
<feature type="transmembrane region" description="Helical" evidence="2">
    <location>
        <begin position="371"/>
        <end position="391"/>
    </location>
</feature>
<feature type="topological domain" description="Cytoplasmic" evidence="2">
    <location>
        <begin position="392"/>
        <end position="459"/>
    </location>
</feature>
<feature type="transmembrane region" description="Helical" evidence="2">
    <location>
        <begin position="460"/>
        <end position="480"/>
    </location>
</feature>
<feature type="topological domain" description="Extracellular" evidence="2">
    <location>
        <begin position="481"/>
        <end position="489"/>
    </location>
</feature>
<feature type="region of interest" description="Disordered" evidence="3">
    <location>
        <begin position="413"/>
        <end position="432"/>
    </location>
</feature>
<feature type="glycosylation site" description="N-linked (GlcNAc...) asparagine" evidence="2">
    <location>
        <position position="34"/>
    </location>
</feature>
<keyword id="KW-0325">Glycoprotein</keyword>
<keyword id="KW-0472">Membrane</keyword>
<keyword id="KW-1185">Reference proteome</keyword>
<keyword id="KW-0732">Signal</keyword>
<keyword id="KW-0812">Transmembrane</keyword>
<keyword id="KW-1133">Transmembrane helix</keyword>
<protein>
    <recommendedName>
        <fullName>Transmembrane protein 161A</fullName>
    </recommendedName>
</protein>
<name>T161A_XENLA</name>
<gene>
    <name type="primary">tmem161a</name>
</gene>
<comment type="function">
    <text evidence="1">May play a role in protection against oxidative stress.</text>
</comment>
<comment type="subcellular location">
    <subcellularLocation>
        <location evidence="4">Membrane</location>
        <topology evidence="4">Multi-pass membrane protein</topology>
    </subcellularLocation>
</comment>
<comment type="similarity">
    <text evidence="4">Belongs to the TMEM161 family.</text>
</comment>
<evidence type="ECO:0000250" key="1"/>
<evidence type="ECO:0000255" key="2"/>
<evidence type="ECO:0000256" key="3">
    <source>
        <dbReference type="SAM" id="MobiDB-lite"/>
    </source>
</evidence>
<evidence type="ECO:0000305" key="4"/>
<organism>
    <name type="scientific">Xenopus laevis</name>
    <name type="common">African clawed frog</name>
    <dbReference type="NCBI Taxonomy" id="8355"/>
    <lineage>
        <taxon>Eukaryota</taxon>
        <taxon>Metazoa</taxon>
        <taxon>Chordata</taxon>
        <taxon>Craniata</taxon>
        <taxon>Vertebrata</taxon>
        <taxon>Euteleostomi</taxon>
        <taxon>Amphibia</taxon>
        <taxon>Batrachia</taxon>
        <taxon>Anura</taxon>
        <taxon>Pipoidea</taxon>
        <taxon>Pipidae</taxon>
        <taxon>Xenopodinae</taxon>
        <taxon>Xenopus</taxon>
        <taxon>Xenopus</taxon>
    </lineage>
</organism>